<keyword id="KW-0002">3D-structure</keyword>
<keyword id="KW-0998">Cell outer membrane</keyword>
<keyword id="KW-0903">Direct protein sequencing</keyword>
<keyword id="KW-0945">Host-virus interaction</keyword>
<keyword id="KW-0406">Ion transport</keyword>
<keyword id="KW-0472">Membrane</keyword>
<keyword id="KW-0626">Porin</keyword>
<keyword id="KW-1185">Reference proteome</keyword>
<keyword id="KW-0732">Signal</keyword>
<keyword id="KW-0812">Transmembrane</keyword>
<keyword id="KW-1134">Transmembrane beta strand</keyword>
<keyword id="KW-0813">Transport</keyword>
<keyword id="KW-0843">Virulence</keyword>
<evidence type="ECO:0000250" key="1">
    <source>
        <dbReference type="UniProtKB" id="P06996"/>
    </source>
</evidence>
<evidence type="ECO:0000255" key="2"/>
<evidence type="ECO:0000269" key="3">
    <source>
    </source>
</evidence>
<evidence type="ECO:0000269" key="4">
    <source>
    </source>
</evidence>
<evidence type="ECO:0000269" key="5">
    <source>
    </source>
</evidence>
<evidence type="ECO:0000305" key="6"/>
<evidence type="ECO:0000305" key="7">
    <source>
    </source>
</evidence>
<evidence type="ECO:0007744" key="8">
    <source>
        <dbReference type="PDB" id="3NB3"/>
    </source>
</evidence>
<proteinExistence type="evidence at protein level"/>
<dbReference type="EMBL" id="AE005674">
    <property type="protein sequence ID" value="AAN43817.1"/>
    <property type="molecule type" value="Genomic_DNA"/>
</dbReference>
<dbReference type="RefSeq" id="NP_708110.1">
    <property type="nucleotide sequence ID" value="NC_004337.2"/>
</dbReference>
<dbReference type="RefSeq" id="WP_000865562.1">
    <property type="nucleotide sequence ID" value="NZ_WPGW01000022.1"/>
</dbReference>
<dbReference type="PDB" id="3NB3">
    <property type="method" value="EM"/>
    <property type="chains" value="D=22-367"/>
</dbReference>
<dbReference type="PDBsum" id="3NB3"/>
<dbReference type="SMR" id="A0A2S4MYF8"/>
<dbReference type="STRING" id="198214.SF2299"/>
<dbReference type="PaxDb" id="198214-SF2299"/>
<dbReference type="GeneID" id="1026756"/>
<dbReference type="KEGG" id="sfl:SF2299"/>
<dbReference type="PATRIC" id="fig|198214.7.peg.2753"/>
<dbReference type="HOGENOM" id="CLU_058202_0_0_6"/>
<dbReference type="OMA" id="AMYTQSY"/>
<dbReference type="PHI-base" id="PHI:9892"/>
<dbReference type="Proteomes" id="UP000001006">
    <property type="component" value="Chromosome"/>
</dbReference>
<dbReference type="GO" id="GO:0009279">
    <property type="term" value="C:cell outer membrane"/>
    <property type="evidence" value="ECO:0007669"/>
    <property type="project" value="UniProtKB-SubCell"/>
</dbReference>
<dbReference type="GO" id="GO:0046930">
    <property type="term" value="C:pore complex"/>
    <property type="evidence" value="ECO:0007669"/>
    <property type="project" value="UniProtKB-KW"/>
</dbReference>
<dbReference type="GO" id="GO:0015288">
    <property type="term" value="F:porin activity"/>
    <property type="evidence" value="ECO:0007669"/>
    <property type="project" value="UniProtKB-KW"/>
</dbReference>
<dbReference type="GO" id="GO:0034220">
    <property type="term" value="P:monoatomic ion transmembrane transport"/>
    <property type="evidence" value="ECO:0007669"/>
    <property type="project" value="InterPro"/>
</dbReference>
<dbReference type="FunFam" id="2.40.160.10:FF:000002">
    <property type="entry name" value="Outer membrane porin F"/>
    <property type="match status" value="1"/>
</dbReference>
<dbReference type="Gene3D" id="2.40.160.10">
    <property type="entry name" value="Porin"/>
    <property type="match status" value="1"/>
</dbReference>
<dbReference type="InterPro" id="IPR050298">
    <property type="entry name" value="Gram-neg_bact_OMP"/>
</dbReference>
<dbReference type="InterPro" id="IPR023614">
    <property type="entry name" value="Porin_dom_sf"/>
</dbReference>
<dbReference type="InterPro" id="IPR001897">
    <property type="entry name" value="Porin_gammaproteobac"/>
</dbReference>
<dbReference type="InterPro" id="IPR001702">
    <property type="entry name" value="Porin_Gram-ve"/>
</dbReference>
<dbReference type="InterPro" id="IPR013793">
    <property type="entry name" value="Porin_Gram-ve_CS"/>
</dbReference>
<dbReference type="NCBIfam" id="NF007841">
    <property type="entry name" value="PRK10554.1"/>
    <property type="match status" value="1"/>
</dbReference>
<dbReference type="PANTHER" id="PTHR34501:SF1">
    <property type="entry name" value="OUTER MEMBRANE PORIN C"/>
    <property type="match status" value="1"/>
</dbReference>
<dbReference type="PANTHER" id="PTHR34501">
    <property type="entry name" value="PROTEIN YDDL-RELATED"/>
    <property type="match status" value="1"/>
</dbReference>
<dbReference type="Pfam" id="PF00267">
    <property type="entry name" value="Porin_1"/>
    <property type="match status" value="1"/>
</dbReference>
<dbReference type="PRINTS" id="PR00183">
    <property type="entry name" value="ECOLIPORIN"/>
</dbReference>
<dbReference type="PRINTS" id="PR00182">
    <property type="entry name" value="ECOLNEIPORIN"/>
</dbReference>
<dbReference type="SUPFAM" id="SSF56935">
    <property type="entry name" value="Porins"/>
    <property type="match status" value="1"/>
</dbReference>
<dbReference type="PROSITE" id="PS00576">
    <property type="entry name" value="GRAM_NEG_PORIN"/>
    <property type="match status" value="1"/>
</dbReference>
<accession>A0A2S4MYF8</accession>
<accession>Q7C0S7</accession>
<accession>Q83QU7</accession>
<name>OMPC_SHIFL</name>
<reference key="1">
    <citation type="journal article" date="2002" name="Nucleic Acids Res.">
        <title>Genome sequence of Shigella flexneri 2a: insights into pathogenicity through comparison with genomes of Escherichia coli K12 and O157.</title>
        <authorList>
            <person name="Jin Q."/>
            <person name="Yuan Z."/>
            <person name="Xu J."/>
            <person name="Wang Y."/>
            <person name="Shen Y."/>
            <person name="Lu W."/>
            <person name="Wang J."/>
            <person name="Liu H."/>
            <person name="Yang J."/>
            <person name="Yang F."/>
            <person name="Zhang X."/>
            <person name="Zhang J."/>
            <person name="Yang G."/>
            <person name="Wu H."/>
            <person name="Qu D."/>
            <person name="Dong J."/>
            <person name="Sun L."/>
            <person name="Xue Y."/>
            <person name="Zhao A."/>
            <person name="Gao Y."/>
            <person name="Zhu J."/>
            <person name="Kan B."/>
            <person name="Ding K."/>
            <person name="Chen S."/>
            <person name="Cheng H."/>
            <person name="Yao Z."/>
            <person name="He B."/>
            <person name="Chen R."/>
            <person name="Ma D."/>
            <person name="Qiang B."/>
            <person name="Wen Y."/>
            <person name="Hou Y."/>
            <person name="Yu J."/>
        </authorList>
    </citation>
    <scope>NUCLEOTIDE SEQUENCE [LARGE SCALE GENOMIC DNA]</scope>
    <source>
        <strain>301 / Serotype 2a</strain>
    </source>
</reference>
<reference key="2">
    <citation type="journal article" date="2012" name="Virology">
        <title>Structural evolution of the P22-like phages: comparison of Sf6 and P22 procapsid and virion architectures.</title>
        <authorList>
            <person name="Parent K.N."/>
            <person name="Gilcrease E.B."/>
            <person name="Casjens S.R."/>
            <person name="Baker T.S."/>
        </authorList>
    </citation>
    <scope>SUBUNIT (MICROBIAL INFECTION)</scope>
    <scope>SUBCELLULAR LOCATION (MICROBIAL INFECTION)</scope>
    <scope>DISRUPTION PHENOTYPE</scope>
    <source>
        <strain>PE577 / Serotype 2a</strain>
    </source>
</reference>
<reference key="3">
    <citation type="journal article" date="2014" name="Mol. Microbiol.">
        <title>OmpA and OmpC are critical host factors for bacteriophage Sf6 entry in Shigella.</title>
        <authorList>
            <person name="Parent K.N."/>
            <person name="Erb M.L."/>
            <person name="Cardone G."/>
            <person name="Nguyen K."/>
            <person name="Gilcrease E.B."/>
            <person name="Porcek N.B."/>
            <person name="Pogliano J."/>
            <person name="Baker T.S."/>
            <person name="Casjens S.R."/>
        </authorList>
    </citation>
    <scope>FUNCTION (MICROBIAL INFECTION)</scope>
    <scope>DISRUPTION PHENOTYPE</scope>
    <source>
        <strain>PE577 / Serotype 2a</strain>
    </source>
</reference>
<reference evidence="8" key="4">
    <citation type="journal article" date="2011" name="Virology">
        <title>The host outer membrane proteins OmpA and OmpC are associated with the Shigella phage Sf6 virion.</title>
        <authorList>
            <person name="Zhao H."/>
            <person name="Sequeira R.D."/>
            <person name="Galeva N.A."/>
            <person name="Tang L."/>
        </authorList>
    </citation>
    <scope>STRUCTURE BY ELECTRON MICROSCOPY (19.00 ANGSTROMS)</scope>
    <scope>PROTEIN SEQUENCE OF 22-26</scope>
    <scope>IDENTIFICATION BY MASS SPECTROMETRY</scope>
    <scope>SUBUNIT (MICROBIAL INFECTION)</scope>
    <source>
        <strain>M94</strain>
    </source>
</reference>
<protein>
    <recommendedName>
        <fullName>Outer membrane protein C</fullName>
    </recommendedName>
    <alternativeName>
        <fullName>Porin OmpC</fullName>
    </alternativeName>
</protein>
<organism>
    <name type="scientific">Shigella flexneri</name>
    <dbReference type="NCBI Taxonomy" id="623"/>
    <lineage>
        <taxon>Bacteria</taxon>
        <taxon>Pseudomonadati</taxon>
        <taxon>Pseudomonadota</taxon>
        <taxon>Gammaproteobacteria</taxon>
        <taxon>Enterobacterales</taxon>
        <taxon>Enterobacteriaceae</taxon>
        <taxon>Shigella</taxon>
    </lineage>
</organism>
<gene>
    <name type="primary">ompC</name>
    <name type="ordered locus">SF2299</name>
</gene>
<sequence>MKVKVLSLLVPALLVAGAANAAEVYNKDGNKLDLYGKVDGLHYFSDDKSVDGDQTYMRLGFKGETQVTDQLTGYGQWEYQIQGNSAENENNSWTRVAFAGLKFQDVGSFDYGRNYGVVYDVTSWTDVLPEFGGDTYGSDNFMQQRGNGFATYRSTDFFGLVDGLNFAVQYQGKNGSPEGEGMTNNGREALRQNGDGVGGSITYDYEGFGIGAAVSSSKRTDDQNFGLNRYDERYIGNGDRAETYTGGLKYDANNIYLAAQYTQTYNATRVGNLGWANKAQNFEAVAQYQFDFGLRPSLAYLQSKGKNLGVINGRNYDDEDILKYVDVGATYYFNKNMSTYVDYKINLLDDNQFTRDAGINTDNIVALGLVYQF</sequence>
<comment type="function">
    <text evidence="6">Forms pores that allow passive diffusion of small molecules across the outer membrane.</text>
</comment>
<comment type="function">
    <text evidence="5">(Microbial infection) Serves as a less-preferential secondary receptor during phage Sf6 infection; infection requires both lipopolysaccharide (LPS) and (in the absence of OmpA) OmpC can serve as the secondary receptor.</text>
</comment>
<comment type="subunit">
    <text evidence="1">Homotrimer. Forms mixed heterotrimers with OmpF and with PhoE; other mixed heterotrimers are also probable.</text>
</comment>
<comment type="subunit">
    <text evidence="3 4">(Microbial infection) Upon infection with phage Sf6 associates with the mature bacteriophage capsid (PubMed:21071053, PubMed:22386055). Was originally suggested to be within the bacteriophage capsid (PubMed:21071053). This has been disproven (PubMed:22386055).</text>
</comment>
<comment type="subcellular location">
    <subcellularLocation>
        <location evidence="1">Cell outer membrane</location>
        <topology evidence="7">Multi-pass membrane protein</topology>
    </subcellularLocation>
</comment>
<comment type="subcellular location">
    <subcellularLocation>
        <location>Extracellular vesicle</location>
    </subcellularLocation>
    <text evidence="4">(Microbial infection) Upon infection with phage Sf6 is found in extracellular vesicles that associate with the tails of mature bacteriophage particles.</text>
</comment>
<comment type="disruption phenotype">
    <text evidence="4 5">No effect on propagation of phage Sf6 (PubMed:22386055). Upon infection with phage Sf6, single deletion mutant has a wild-type level of small plaques with no change in bacterial survival; double ompA-ompC deletions have about 10-fold fewer plaques, survive infection considerably better than wild-type, are infected more slowly and have fewer extracellular vesicles associated with mature bacteriophage (PubMed:24673644).</text>
</comment>
<comment type="similarity">
    <text evidence="6">Belongs to the Gram-negative porin family.</text>
</comment>
<feature type="signal peptide" evidence="3">
    <location>
        <begin position="1"/>
        <end position="21"/>
    </location>
</feature>
<feature type="chain" id="PRO_0000447415" description="Outer membrane protein C" evidence="2">
    <location>
        <begin position="22"/>
        <end position="373"/>
    </location>
</feature>
<feature type="transmembrane region" description="Beta stranded" evidence="1">
    <location>
        <begin position="34"/>
        <end position="42"/>
    </location>
</feature>
<feature type="transmembrane region" description="Beta stranded" evidence="1">
    <location>
        <begin position="54"/>
        <end position="63"/>
    </location>
</feature>
<feature type="transmembrane region" description="Beta stranded" evidence="1">
    <location>
        <begin position="74"/>
        <end position="84"/>
    </location>
</feature>
<feature type="transmembrane region" description="Beta stranded" evidence="1">
    <location>
        <begin position="92"/>
        <end position="101"/>
    </location>
</feature>
<feature type="transmembrane region" description="Beta stranded" evidence="1">
    <location>
        <begin position="107"/>
        <end position="115"/>
    </location>
</feature>
<feature type="transmembrane region" description="Beta stranded" evidence="1">
    <location>
        <begin position="142"/>
        <end position="154"/>
    </location>
</feature>
<feature type="transmembrane region" description="Beta stranded" evidence="1">
    <location>
        <begin position="164"/>
        <end position="171"/>
    </location>
</feature>
<feature type="transmembrane region" description="Beta stranded" evidence="1">
    <location>
        <begin position="197"/>
        <end position="203"/>
    </location>
</feature>
<feature type="transmembrane region" description="Beta stranded" evidence="1">
    <location>
        <begin position="208"/>
        <end position="215"/>
    </location>
</feature>
<feature type="transmembrane region" description="Beta stranded" evidence="1">
    <location>
        <begin position="244"/>
        <end position="250"/>
    </location>
</feature>
<feature type="transmembrane region" description="Beta stranded" evidence="1">
    <location>
        <begin position="255"/>
        <end position="262"/>
    </location>
</feature>
<feature type="transmembrane region" description="Beta stranded" evidence="1">
    <location>
        <begin position="272"/>
        <end position="288"/>
    </location>
</feature>
<feature type="transmembrane region" description="Beta stranded" evidence="1">
    <location>
        <begin position="294"/>
        <end position="301"/>
    </location>
</feature>
<feature type="transmembrane region" description="Beta stranded" evidence="1">
    <location>
        <begin position="325"/>
        <end position="332"/>
    </location>
</feature>
<feature type="transmembrane region" description="Beta stranded" evidence="1">
    <location>
        <begin position="337"/>
        <end position="344"/>
    </location>
</feature>
<feature type="transmembrane region" description="Beta stranded" evidence="1">
    <location>
        <begin position="365"/>
        <end position="372"/>
    </location>
</feature>
<feature type="region of interest" description="Loop L3; may constrict the pore" evidence="1">
    <location>
        <begin position="116"/>
        <end position="133"/>
    </location>
</feature>